<evidence type="ECO:0000255" key="1">
    <source>
        <dbReference type="HAMAP-Rule" id="MF_00776"/>
    </source>
</evidence>
<evidence type="ECO:0007829" key="2">
    <source>
        <dbReference type="PDB" id="5AOV"/>
    </source>
</evidence>
<accession>Q8U3Y2</accession>
<organism>
    <name type="scientific">Pyrococcus furiosus (strain ATCC 43587 / DSM 3638 / JCM 8422 / Vc1)</name>
    <dbReference type="NCBI Taxonomy" id="186497"/>
    <lineage>
        <taxon>Archaea</taxon>
        <taxon>Methanobacteriati</taxon>
        <taxon>Methanobacteriota</taxon>
        <taxon>Thermococci</taxon>
        <taxon>Thermococcales</taxon>
        <taxon>Thermococcaceae</taxon>
        <taxon>Pyrococcus</taxon>
    </lineage>
</organism>
<proteinExistence type="evidence at protein level"/>
<sequence length="336" mass="38342">MKPKVFITRAIPENGINMLEEEFEVEVWEEEREIPREKLLEKVKDVDALVTMLSERIDQEVFENAPRLRIVANYAVGYDNIDVEEATRRGIYVTNTPDVLTNATADHAFALLLATARHVVKGDKFVRSGEWKRKGIAWHPKWFLGYELYGKTIGIVGFGRIGQAIARRAKGFNMRILYYSRTRKSQAEKELGAEYRPLEEVLKESDFVILAVPLTKETMYMINEERLKLMKPTAILVNIARGKVVDTKALIKALKEGWIAGAGLDVFEEEPYYNEELFSLDNVVLTPHIGSATFEAREAMAELVARNLIAFKRGEIPPTLVNKEVIKIRKPGFNEQ</sequence>
<comment type="catalytic activity">
    <reaction evidence="1">
        <text>glycolate + NAD(+) = glyoxylate + NADH + H(+)</text>
        <dbReference type="Rhea" id="RHEA:18229"/>
        <dbReference type="ChEBI" id="CHEBI:15378"/>
        <dbReference type="ChEBI" id="CHEBI:29805"/>
        <dbReference type="ChEBI" id="CHEBI:36655"/>
        <dbReference type="ChEBI" id="CHEBI:57540"/>
        <dbReference type="ChEBI" id="CHEBI:57945"/>
        <dbReference type="EC" id="1.1.1.26"/>
    </reaction>
</comment>
<comment type="subunit">
    <text evidence="1">Homodimer.</text>
</comment>
<comment type="subcellular location">
    <subcellularLocation>
        <location evidence="1">Cytoplasm</location>
    </subcellularLocation>
</comment>
<comment type="similarity">
    <text evidence="1">Belongs to the D-isomer specific 2-hydroxyacid dehydrogenase family. GyaR subfamily.</text>
</comment>
<keyword id="KW-0002">3D-structure</keyword>
<keyword id="KW-0963">Cytoplasm</keyword>
<keyword id="KW-0520">NAD</keyword>
<keyword id="KW-0560">Oxidoreductase</keyword>
<keyword id="KW-1185">Reference proteome</keyword>
<protein>
    <recommendedName>
        <fullName evidence="1">Glyoxylate reductase</fullName>
        <ecNumber evidence="1">1.1.1.26</ecNumber>
    </recommendedName>
</protein>
<reference key="1">
    <citation type="journal article" date="1999" name="Genetics">
        <title>Divergence of the hyperthermophilic archaea Pyrococcus furiosus and P. horikoshii inferred from complete genomic sequences.</title>
        <authorList>
            <person name="Maeder D.L."/>
            <person name="Weiss R.B."/>
            <person name="Dunn D.M."/>
            <person name="Cherry J.L."/>
            <person name="Gonzalez J.M."/>
            <person name="DiRuggiero J."/>
            <person name="Robb F.T."/>
        </authorList>
    </citation>
    <scope>NUCLEOTIDE SEQUENCE [LARGE SCALE GENOMIC DNA]</scope>
    <source>
        <strain>ATCC 43587 / DSM 3638 / JCM 8422 / Vc1</strain>
    </source>
</reference>
<gene>
    <name evidence="1" type="primary">gyaR</name>
    <name type="ordered locus">PF0319</name>
</gene>
<dbReference type="EC" id="1.1.1.26" evidence="1"/>
<dbReference type="EMBL" id="AE009950">
    <property type="protein sequence ID" value="AAL80443.1"/>
    <property type="molecule type" value="Genomic_DNA"/>
</dbReference>
<dbReference type="RefSeq" id="WP_011011434.1">
    <property type="nucleotide sequence ID" value="NZ_CP023154.1"/>
</dbReference>
<dbReference type="PDB" id="5AOV">
    <property type="method" value="X-ray"/>
    <property type="resolution" value="1.40 A"/>
    <property type="chains" value="A=1-336"/>
</dbReference>
<dbReference type="PDBsum" id="5AOV"/>
<dbReference type="SMR" id="Q8U3Y2"/>
<dbReference type="STRING" id="186497.PF0319"/>
<dbReference type="PaxDb" id="186497-PF0319"/>
<dbReference type="GeneID" id="41712111"/>
<dbReference type="KEGG" id="pfu:PF0319"/>
<dbReference type="PATRIC" id="fig|186497.12.peg.334"/>
<dbReference type="eggNOG" id="arCOG01755">
    <property type="taxonomic scope" value="Archaea"/>
</dbReference>
<dbReference type="HOGENOM" id="CLU_019796_1_2_2"/>
<dbReference type="OrthoDB" id="34275at2157"/>
<dbReference type="PhylomeDB" id="Q8U3Y2"/>
<dbReference type="BioCyc" id="MetaCyc:MONOMER-17245"/>
<dbReference type="BRENDA" id="1.1.1.79">
    <property type="organism ID" value="5243"/>
</dbReference>
<dbReference type="BRENDA" id="1.1.1.81">
    <property type="organism ID" value="5243"/>
</dbReference>
<dbReference type="Proteomes" id="UP000001013">
    <property type="component" value="Chromosome"/>
</dbReference>
<dbReference type="GO" id="GO:0005829">
    <property type="term" value="C:cytosol"/>
    <property type="evidence" value="ECO:0007669"/>
    <property type="project" value="TreeGrafter"/>
</dbReference>
<dbReference type="GO" id="GO:0047964">
    <property type="term" value="F:glyoxylate reductase (NADH) activity"/>
    <property type="evidence" value="ECO:0007669"/>
    <property type="project" value="UniProtKB-UniRule"/>
</dbReference>
<dbReference type="GO" id="GO:0030267">
    <property type="term" value="F:glyoxylate reductase (NADPH) activity"/>
    <property type="evidence" value="ECO:0007669"/>
    <property type="project" value="TreeGrafter"/>
</dbReference>
<dbReference type="GO" id="GO:0016618">
    <property type="term" value="F:hydroxypyruvate reductase [NAD(P)H] activity"/>
    <property type="evidence" value="ECO:0007669"/>
    <property type="project" value="TreeGrafter"/>
</dbReference>
<dbReference type="GO" id="GO:0051287">
    <property type="term" value="F:NAD binding"/>
    <property type="evidence" value="ECO:0007669"/>
    <property type="project" value="InterPro"/>
</dbReference>
<dbReference type="CDD" id="cd05301">
    <property type="entry name" value="GDH"/>
    <property type="match status" value="1"/>
</dbReference>
<dbReference type="FunFam" id="3.40.50.720:FF:000462">
    <property type="entry name" value="Glyoxylate reductase (NADP+)"/>
    <property type="match status" value="1"/>
</dbReference>
<dbReference type="Gene3D" id="3.40.50.720">
    <property type="entry name" value="NAD(P)-binding Rossmann-like Domain"/>
    <property type="match status" value="2"/>
</dbReference>
<dbReference type="HAMAP" id="MF_00776">
    <property type="entry name" value="GyaR"/>
    <property type="match status" value="1"/>
</dbReference>
<dbReference type="InterPro" id="IPR050223">
    <property type="entry name" value="D-isomer_2-hydroxyacid_DH"/>
</dbReference>
<dbReference type="InterPro" id="IPR006139">
    <property type="entry name" value="D-isomer_2_OHA_DH_cat_dom"/>
</dbReference>
<dbReference type="InterPro" id="IPR029753">
    <property type="entry name" value="D-isomer_DH_CS"/>
</dbReference>
<dbReference type="InterPro" id="IPR029752">
    <property type="entry name" value="D-isomer_DH_CS1"/>
</dbReference>
<dbReference type="InterPro" id="IPR006140">
    <property type="entry name" value="D-isomer_DH_NAD-bd"/>
</dbReference>
<dbReference type="InterPro" id="IPR023519">
    <property type="entry name" value="Glyoxylate_reductase_GyaR"/>
</dbReference>
<dbReference type="InterPro" id="IPR036291">
    <property type="entry name" value="NAD(P)-bd_dom_sf"/>
</dbReference>
<dbReference type="NCBIfam" id="NF009714">
    <property type="entry name" value="PRK13243.1"/>
    <property type="match status" value="1"/>
</dbReference>
<dbReference type="PANTHER" id="PTHR10996">
    <property type="entry name" value="2-HYDROXYACID DEHYDROGENASE-RELATED"/>
    <property type="match status" value="1"/>
</dbReference>
<dbReference type="PANTHER" id="PTHR10996:SF283">
    <property type="entry name" value="GLYOXYLATE_HYDROXYPYRUVATE REDUCTASE B"/>
    <property type="match status" value="1"/>
</dbReference>
<dbReference type="Pfam" id="PF00389">
    <property type="entry name" value="2-Hacid_dh"/>
    <property type="match status" value="1"/>
</dbReference>
<dbReference type="Pfam" id="PF02826">
    <property type="entry name" value="2-Hacid_dh_C"/>
    <property type="match status" value="1"/>
</dbReference>
<dbReference type="SUPFAM" id="SSF52283">
    <property type="entry name" value="Formate/glycerate dehydrogenase catalytic domain-like"/>
    <property type="match status" value="1"/>
</dbReference>
<dbReference type="SUPFAM" id="SSF51735">
    <property type="entry name" value="NAD(P)-binding Rossmann-fold domains"/>
    <property type="match status" value="1"/>
</dbReference>
<dbReference type="PROSITE" id="PS00065">
    <property type="entry name" value="D_2_HYDROXYACID_DH_1"/>
    <property type="match status" value="1"/>
</dbReference>
<dbReference type="PROSITE" id="PS00671">
    <property type="entry name" value="D_2_HYDROXYACID_DH_3"/>
    <property type="match status" value="1"/>
</dbReference>
<name>GYAR_PYRFU</name>
<feature type="chain" id="PRO_0000075948" description="Glyoxylate reductase">
    <location>
        <begin position="1"/>
        <end position="336"/>
    </location>
</feature>
<feature type="active site" evidence="1">
    <location>
        <position position="241"/>
    </location>
</feature>
<feature type="active site" evidence="1">
    <location>
        <position position="270"/>
    </location>
</feature>
<feature type="active site" description="Proton donor" evidence="1">
    <location>
        <position position="288"/>
    </location>
</feature>
<feature type="binding site" evidence="1">
    <location>
        <begin position="158"/>
        <end position="161"/>
    </location>
    <ligand>
        <name>NADP(+)</name>
        <dbReference type="ChEBI" id="CHEBI:58349"/>
    </ligand>
</feature>
<feature type="binding site" evidence="1">
    <location>
        <begin position="180"/>
        <end position="182"/>
    </location>
    <ligand>
        <name>NADP(+)</name>
        <dbReference type="ChEBI" id="CHEBI:58349"/>
    </ligand>
</feature>
<feature type="binding site" evidence="1">
    <location>
        <begin position="239"/>
        <end position="241"/>
    </location>
    <ligand>
        <name>NADP(+)</name>
        <dbReference type="ChEBI" id="CHEBI:58349"/>
    </ligand>
</feature>
<feature type="binding site" evidence="1">
    <location>
        <begin position="288"/>
        <end position="290"/>
    </location>
    <ligand>
        <name>NADP(+)</name>
        <dbReference type="ChEBI" id="CHEBI:58349"/>
    </ligand>
</feature>
<feature type="strand" evidence="2">
    <location>
        <begin position="4"/>
        <end position="7"/>
    </location>
</feature>
<feature type="helix" evidence="2">
    <location>
        <begin position="13"/>
        <end position="20"/>
    </location>
</feature>
<feature type="strand" evidence="2">
    <location>
        <begin position="23"/>
        <end position="27"/>
    </location>
</feature>
<feature type="helix" evidence="2">
    <location>
        <begin position="36"/>
        <end position="42"/>
    </location>
</feature>
<feature type="helix" evidence="2">
    <location>
        <begin position="43"/>
        <end position="45"/>
    </location>
</feature>
<feature type="strand" evidence="2">
    <location>
        <begin position="47"/>
        <end position="51"/>
    </location>
</feature>
<feature type="helix" evidence="2">
    <location>
        <begin position="59"/>
        <end position="63"/>
    </location>
</feature>
<feature type="strand" evidence="2">
    <location>
        <begin position="70"/>
        <end position="76"/>
    </location>
</feature>
<feature type="helix" evidence="2">
    <location>
        <begin position="83"/>
        <end position="88"/>
    </location>
</feature>
<feature type="strand" evidence="2">
    <location>
        <begin position="92"/>
        <end position="94"/>
    </location>
</feature>
<feature type="helix" evidence="2">
    <location>
        <begin position="101"/>
        <end position="117"/>
    </location>
</feature>
<feature type="helix" evidence="2">
    <location>
        <begin position="119"/>
        <end position="127"/>
    </location>
</feature>
<feature type="helix" evidence="2">
    <location>
        <begin position="130"/>
        <end position="134"/>
    </location>
</feature>
<feature type="turn" evidence="2">
    <location>
        <begin position="140"/>
        <end position="143"/>
    </location>
</feature>
<feature type="strand" evidence="2">
    <location>
        <begin position="152"/>
        <end position="157"/>
    </location>
</feature>
<feature type="helix" evidence="2">
    <location>
        <begin position="160"/>
        <end position="170"/>
    </location>
</feature>
<feature type="turn" evidence="2">
    <location>
        <begin position="171"/>
        <end position="173"/>
    </location>
</feature>
<feature type="strand" evidence="2">
    <location>
        <begin position="175"/>
        <end position="179"/>
    </location>
</feature>
<feature type="helix" evidence="2">
    <location>
        <begin position="185"/>
        <end position="191"/>
    </location>
</feature>
<feature type="helix" evidence="2">
    <location>
        <begin position="198"/>
        <end position="204"/>
    </location>
</feature>
<feature type="strand" evidence="2">
    <location>
        <begin position="206"/>
        <end position="210"/>
    </location>
</feature>
<feature type="turn" evidence="2">
    <location>
        <begin position="216"/>
        <end position="220"/>
    </location>
</feature>
<feature type="helix" evidence="2">
    <location>
        <begin position="224"/>
        <end position="229"/>
    </location>
</feature>
<feature type="strand" evidence="2">
    <location>
        <begin position="235"/>
        <end position="238"/>
    </location>
</feature>
<feature type="helix" evidence="2">
    <location>
        <begin position="242"/>
        <end position="244"/>
    </location>
</feature>
<feature type="helix" evidence="2">
    <location>
        <begin position="247"/>
        <end position="255"/>
    </location>
</feature>
<feature type="strand" evidence="2">
    <location>
        <begin position="258"/>
        <end position="265"/>
    </location>
</feature>
<feature type="strand" evidence="2">
    <location>
        <begin position="268"/>
        <end position="271"/>
    </location>
</feature>
<feature type="helix" evidence="2">
    <location>
        <begin position="275"/>
        <end position="278"/>
    </location>
</feature>
<feature type="strand" evidence="2">
    <location>
        <begin position="283"/>
        <end position="285"/>
    </location>
</feature>
<feature type="helix" evidence="2">
    <location>
        <begin position="294"/>
        <end position="312"/>
    </location>
</feature>
<feature type="helix" evidence="2">
    <location>
        <begin position="325"/>
        <end position="328"/>
    </location>
</feature>